<comment type="function">
    <text evidence="1">Part of the phosphoribosylformylglycinamidine synthase complex involved in the purines biosynthetic pathway. Catalyzes the ATP-dependent conversion of formylglycinamide ribonucleotide (FGAR) and glutamine to yield formylglycinamidine ribonucleotide (FGAM) and glutamate. The FGAM synthase complex is composed of three subunits. PurQ produces an ammonia molecule by converting glutamine to glutamate. PurL transfers the ammonia molecule to FGAR to form FGAM in an ATP-dependent manner. PurS interacts with PurQ and PurL and is thought to assist in the transfer of the ammonia molecule from PurQ to PurL.</text>
</comment>
<comment type="catalytic activity">
    <reaction evidence="1">
        <text>N(2)-formyl-N(1)-(5-phospho-beta-D-ribosyl)glycinamide + L-glutamine + ATP + H2O = 2-formamido-N(1)-(5-O-phospho-beta-D-ribosyl)acetamidine + L-glutamate + ADP + phosphate + H(+)</text>
        <dbReference type="Rhea" id="RHEA:17129"/>
        <dbReference type="ChEBI" id="CHEBI:15377"/>
        <dbReference type="ChEBI" id="CHEBI:15378"/>
        <dbReference type="ChEBI" id="CHEBI:29985"/>
        <dbReference type="ChEBI" id="CHEBI:30616"/>
        <dbReference type="ChEBI" id="CHEBI:43474"/>
        <dbReference type="ChEBI" id="CHEBI:58359"/>
        <dbReference type="ChEBI" id="CHEBI:147286"/>
        <dbReference type="ChEBI" id="CHEBI:147287"/>
        <dbReference type="ChEBI" id="CHEBI:456216"/>
        <dbReference type="EC" id="6.3.5.3"/>
    </reaction>
</comment>
<comment type="pathway">
    <text evidence="1">Purine metabolism; IMP biosynthesis via de novo pathway; 5-amino-1-(5-phospho-D-ribosyl)imidazole from N(2)-formyl-N(1)-(5-phospho-D-ribosyl)glycinamide: step 1/2.</text>
</comment>
<comment type="subunit">
    <text evidence="1">Monomer. Part of the FGAM synthase complex composed of 1 PurL, 1 PurQ and 2 PurS subunits.</text>
</comment>
<comment type="subcellular location">
    <subcellularLocation>
        <location evidence="1">Cytoplasm</location>
    </subcellularLocation>
</comment>
<comment type="similarity">
    <text evidence="1">Belongs to the FGAMS family.</text>
</comment>
<dbReference type="EC" id="6.3.5.3" evidence="1"/>
<dbReference type="EMBL" id="CP000157">
    <property type="protein sequence ID" value="ABC63203.1"/>
    <property type="molecule type" value="Genomic_DNA"/>
</dbReference>
<dbReference type="RefSeq" id="WP_011414039.1">
    <property type="nucleotide sequence ID" value="NC_007722.1"/>
</dbReference>
<dbReference type="SMR" id="Q2NAT8"/>
<dbReference type="STRING" id="314225.ELI_05555"/>
<dbReference type="KEGG" id="eli:ELI_05555"/>
<dbReference type="eggNOG" id="COG0046">
    <property type="taxonomic scope" value="Bacteria"/>
</dbReference>
<dbReference type="HOGENOM" id="CLU_003100_0_1_5"/>
<dbReference type="OrthoDB" id="9804441at2"/>
<dbReference type="UniPathway" id="UPA00074">
    <property type="reaction ID" value="UER00128"/>
</dbReference>
<dbReference type="Proteomes" id="UP000008808">
    <property type="component" value="Chromosome"/>
</dbReference>
<dbReference type="GO" id="GO:0005737">
    <property type="term" value="C:cytoplasm"/>
    <property type="evidence" value="ECO:0007669"/>
    <property type="project" value="UniProtKB-SubCell"/>
</dbReference>
<dbReference type="GO" id="GO:0005524">
    <property type="term" value="F:ATP binding"/>
    <property type="evidence" value="ECO:0007669"/>
    <property type="project" value="UniProtKB-UniRule"/>
</dbReference>
<dbReference type="GO" id="GO:0000287">
    <property type="term" value="F:magnesium ion binding"/>
    <property type="evidence" value="ECO:0007669"/>
    <property type="project" value="UniProtKB-UniRule"/>
</dbReference>
<dbReference type="GO" id="GO:0004642">
    <property type="term" value="F:phosphoribosylformylglycinamidine synthase activity"/>
    <property type="evidence" value="ECO:0007669"/>
    <property type="project" value="UniProtKB-UniRule"/>
</dbReference>
<dbReference type="GO" id="GO:0006189">
    <property type="term" value="P:'de novo' IMP biosynthetic process"/>
    <property type="evidence" value="ECO:0007669"/>
    <property type="project" value="UniProtKB-UniRule"/>
</dbReference>
<dbReference type="CDD" id="cd02203">
    <property type="entry name" value="PurL_repeat1"/>
    <property type="match status" value="1"/>
</dbReference>
<dbReference type="CDD" id="cd02204">
    <property type="entry name" value="PurL_repeat2"/>
    <property type="match status" value="1"/>
</dbReference>
<dbReference type="FunFam" id="3.30.1330.10:FF:000004">
    <property type="entry name" value="Phosphoribosylformylglycinamidine synthase subunit PurL"/>
    <property type="match status" value="1"/>
</dbReference>
<dbReference type="Gene3D" id="3.90.650.10">
    <property type="entry name" value="PurM-like C-terminal domain"/>
    <property type="match status" value="2"/>
</dbReference>
<dbReference type="Gene3D" id="3.30.1330.10">
    <property type="entry name" value="PurM-like, N-terminal domain"/>
    <property type="match status" value="2"/>
</dbReference>
<dbReference type="HAMAP" id="MF_00420">
    <property type="entry name" value="PurL_2"/>
    <property type="match status" value="1"/>
</dbReference>
<dbReference type="InterPro" id="IPR010074">
    <property type="entry name" value="PRibForGlyAmidine_synth_PurL"/>
</dbReference>
<dbReference type="InterPro" id="IPR041609">
    <property type="entry name" value="PurL_linker"/>
</dbReference>
<dbReference type="InterPro" id="IPR010918">
    <property type="entry name" value="PurM-like_C_dom"/>
</dbReference>
<dbReference type="InterPro" id="IPR036676">
    <property type="entry name" value="PurM-like_C_sf"/>
</dbReference>
<dbReference type="InterPro" id="IPR016188">
    <property type="entry name" value="PurM-like_N"/>
</dbReference>
<dbReference type="InterPro" id="IPR036921">
    <property type="entry name" value="PurM-like_N_sf"/>
</dbReference>
<dbReference type="NCBIfam" id="TIGR01736">
    <property type="entry name" value="FGAM_synth_II"/>
    <property type="match status" value="1"/>
</dbReference>
<dbReference type="NCBIfam" id="NF002290">
    <property type="entry name" value="PRK01213.1"/>
    <property type="match status" value="1"/>
</dbReference>
<dbReference type="PANTHER" id="PTHR43555">
    <property type="entry name" value="PHOSPHORIBOSYLFORMYLGLYCINAMIDINE SYNTHASE SUBUNIT PURL"/>
    <property type="match status" value="1"/>
</dbReference>
<dbReference type="PANTHER" id="PTHR43555:SF1">
    <property type="entry name" value="PHOSPHORIBOSYLFORMYLGLYCINAMIDINE SYNTHASE SUBUNIT PURL"/>
    <property type="match status" value="1"/>
</dbReference>
<dbReference type="Pfam" id="PF00586">
    <property type="entry name" value="AIRS"/>
    <property type="match status" value="2"/>
</dbReference>
<dbReference type="Pfam" id="PF02769">
    <property type="entry name" value="AIRS_C"/>
    <property type="match status" value="2"/>
</dbReference>
<dbReference type="Pfam" id="PF18072">
    <property type="entry name" value="FGAR-AT_linker"/>
    <property type="match status" value="1"/>
</dbReference>
<dbReference type="PIRSF" id="PIRSF001587">
    <property type="entry name" value="FGAM_synthase_II"/>
    <property type="match status" value="1"/>
</dbReference>
<dbReference type="SUPFAM" id="SSF56042">
    <property type="entry name" value="PurM C-terminal domain-like"/>
    <property type="match status" value="2"/>
</dbReference>
<dbReference type="SUPFAM" id="SSF55326">
    <property type="entry name" value="PurM N-terminal domain-like"/>
    <property type="match status" value="2"/>
</dbReference>
<gene>
    <name evidence="1" type="primary">purL</name>
    <name type="ordered locus">ELI_05555</name>
</gene>
<name>PURL_ERYLH</name>
<keyword id="KW-0067">ATP-binding</keyword>
<keyword id="KW-0963">Cytoplasm</keyword>
<keyword id="KW-0436">Ligase</keyword>
<keyword id="KW-0460">Magnesium</keyword>
<keyword id="KW-0479">Metal-binding</keyword>
<keyword id="KW-0547">Nucleotide-binding</keyword>
<keyword id="KW-0658">Purine biosynthesis</keyword>
<keyword id="KW-1185">Reference proteome</keyword>
<evidence type="ECO:0000255" key="1">
    <source>
        <dbReference type="HAMAP-Rule" id="MF_00420"/>
    </source>
</evidence>
<organism>
    <name type="scientific">Erythrobacter litoralis (strain HTCC2594)</name>
    <dbReference type="NCBI Taxonomy" id="314225"/>
    <lineage>
        <taxon>Bacteria</taxon>
        <taxon>Pseudomonadati</taxon>
        <taxon>Pseudomonadota</taxon>
        <taxon>Alphaproteobacteria</taxon>
        <taxon>Sphingomonadales</taxon>
        <taxon>Erythrobacteraceae</taxon>
        <taxon>Erythrobacter/Porphyrobacter group</taxon>
        <taxon>Erythrobacter</taxon>
    </lineage>
</organism>
<reference key="1">
    <citation type="journal article" date="2009" name="J. Bacteriol.">
        <title>Complete genome sequence of Erythrobacter litoralis HTCC2594.</title>
        <authorList>
            <person name="Oh H.M."/>
            <person name="Giovannoni S.J."/>
            <person name="Ferriera S."/>
            <person name="Johnson J."/>
            <person name="Cho J.C."/>
        </authorList>
    </citation>
    <scope>NUCLEOTIDE SEQUENCE [LARGE SCALE GENOMIC DNA]</scope>
    <source>
        <strain>HTCC2594</strain>
    </source>
</reference>
<sequence>MSEITPEVVESHGLSSEEYDVILKALGREPNLVELGIFSVMWSEHCSYKSSRLHLKKLPTEAPWVICGPGENAGVIDIGDGHAAIFKMESHNHPSYIEPYQGAATGVGGILRDVFTMGARPVANANALRFGRPEHPKMKHLVQGVVAGIGGYGNCVGVPTVCGETNFHPAYDGNILVNAMTVGVADTDKIFYSAATGVGNPIVYVGSKTGRDGIHGATMASTDFEEDSDAKRPTVQVGDPFTEKLLIEACLELMATDAIVAIQDMGAAGLTSSSVEMATNGKTGIRLDMDKVPCREEGMTPYEMMLSESQERMLMVLKPGKEEMAAEIFKKWELDFAVIGEVTDTQRMVLEFGGEVVCDIPLGPLADEAPLYDRPTISLEEYKAWAKIAPITDAPDSADPGADLLKLMASPNLASRAWIAEQYDSQVGADTLQTGGDAGVVRVHGTKKALAISTDCTPRYCYADPYEGGKQAIAEAYRNLCAVGARPLAVTNCLNFANPQRPEIMTQLVEALRGMGDACRMLDFPIVSGNVSLYNESKATGGGSAILPTPAIGGVGIIDDYERMMTMGFKNAGDTIYLVGPEFWATPDPTRSHLGKSLWLDVVHGRDEGRTPPTDLVVERNAGKIIHELIDDGLVNAVHDVSDGGLAVALAEMALSGGTGADVEQNSEYTAAQWWFGEDQGRYVVTVPDTEALNEALSKGTENAETAQIGFRRIGTVGGDGLLGVSLADLREAHASFFREWMEV</sequence>
<accession>Q2NAT8</accession>
<proteinExistence type="inferred from homology"/>
<feature type="chain" id="PRO_1000050307" description="Phosphoribosylformylglycinamidine synthase subunit PurL">
    <location>
        <begin position="1"/>
        <end position="744"/>
    </location>
</feature>
<feature type="active site" evidence="1">
    <location>
        <position position="45"/>
    </location>
</feature>
<feature type="active site" description="Proton acceptor" evidence="1">
    <location>
        <position position="91"/>
    </location>
</feature>
<feature type="binding site" evidence="1">
    <location>
        <position position="48"/>
    </location>
    <ligand>
        <name>ATP</name>
        <dbReference type="ChEBI" id="CHEBI:30616"/>
    </ligand>
</feature>
<feature type="binding site" evidence="1">
    <location>
        <position position="87"/>
    </location>
    <ligand>
        <name>ATP</name>
        <dbReference type="ChEBI" id="CHEBI:30616"/>
    </ligand>
</feature>
<feature type="binding site" evidence="1">
    <location>
        <position position="89"/>
    </location>
    <ligand>
        <name>Mg(2+)</name>
        <dbReference type="ChEBI" id="CHEBI:18420"/>
        <label>1</label>
    </ligand>
</feature>
<feature type="binding site" evidence="1">
    <location>
        <begin position="90"/>
        <end position="93"/>
    </location>
    <ligand>
        <name>substrate</name>
    </ligand>
</feature>
<feature type="binding site" evidence="1">
    <location>
        <position position="112"/>
    </location>
    <ligand>
        <name>substrate</name>
    </ligand>
</feature>
<feature type="binding site" evidence="1">
    <location>
        <position position="113"/>
    </location>
    <ligand>
        <name>Mg(2+)</name>
        <dbReference type="ChEBI" id="CHEBI:18420"/>
        <label>2</label>
    </ligand>
</feature>
<feature type="binding site" evidence="1">
    <location>
        <position position="236"/>
    </location>
    <ligand>
        <name>substrate</name>
    </ligand>
</feature>
<feature type="binding site" evidence="1">
    <location>
        <position position="264"/>
    </location>
    <ligand>
        <name>Mg(2+)</name>
        <dbReference type="ChEBI" id="CHEBI:18420"/>
        <label>2</label>
    </ligand>
</feature>
<feature type="binding site" evidence="1">
    <location>
        <begin position="308"/>
        <end position="310"/>
    </location>
    <ligand>
        <name>substrate</name>
    </ligand>
</feature>
<feature type="binding site" evidence="1">
    <location>
        <position position="492"/>
    </location>
    <ligand>
        <name>ATP</name>
        <dbReference type="ChEBI" id="CHEBI:30616"/>
    </ligand>
</feature>
<feature type="binding site" evidence="1">
    <location>
        <position position="529"/>
    </location>
    <ligand>
        <name>ATP</name>
        <dbReference type="ChEBI" id="CHEBI:30616"/>
    </ligand>
</feature>
<feature type="binding site" evidence="1">
    <location>
        <position position="530"/>
    </location>
    <ligand>
        <name>Mg(2+)</name>
        <dbReference type="ChEBI" id="CHEBI:18420"/>
        <label>1</label>
    </ligand>
</feature>
<feature type="binding site" evidence="1">
    <location>
        <position position="532"/>
    </location>
    <ligand>
        <name>substrate</name>
    </ligand>
</feature>
<protein>
    <recommendedName>
        <fullName evidence="1">Phosphoribosylformylglycinamidine synthase subunit PurL</fullName>
        <shortName evidence="1">FGAM synthase</shortName>
        <ecNumber evidence="1">6.3.5.3</ecNumber>
    </recommendedName>
    <alternativeName>
        <fullName evidence="1">Formylglycinamide ribonucleotide amidotransferase subunit II</fullName>
        <shortName evidence="1">FGAR amidotransferase II</shortName>
        <shortName evidence="1">FGAR-AT II</shortName>
    </alternativeName>
    <alternativeName>
        <fullName evidence="1">Glutamine amidotransferase PurL</fullName>
    </alternativeName>
    <alternativeName>
        <fullName evidence="1">Phosphoribosylformylglycinamidine synthase subunit II</fullName>
    </alternativeName>
</protein>